<proteinExistence type="inferred from homology"/>
<reference key="1">
    <citation type="journal article" date="2012" name="Stand. Genomic Sci.">
        <title>Complete genome sequence of Marinomonas posidonica type strain (IVIA-Po-181(T)).</title>
        <authorList>
            <person name="Lucas-Elio P."/>
            <person name="Goodwin L."/>
            <person name="Woyke T."/>
            <person name="Pitluck S."/>
            <person name="Nolan M."/>
            <person name="Kyrpides N.C."/>
            <person name="Detter J.C."/>
            <person name="Copeland A."/>
            <person name="Lu M."/>
            <person name="Bruce D."/>
            <person name="Detter C."/>
            <person name="Tapia R."/>
            <person name="Han S."/>
            <person name="Land M.L."/>
            <person name="Ivanova N."/>
            <person name="Mikhailova N."/>
            <person name="Johnston A.W."/>
            <person name="Sanchez-Amat A."/>
        </authorList>
    </citation>
    <scope>NUCLEOTIDE SEQUENCE [LARGE SCALE GENOMIC DNA]</scope>
    <source>
        <strain>CECT 7376 / NCIMB 14433 / IVIA-Po-181</strain>
    </source>
</reference>
<organism>
    <name type="scientific">Marinomonas posidonica (strain CECT 7376 / NCIMB 14433 / IVIA-Po-181)</name>
    <dbReference type="NCBI Taxonomy" id="491952"/>
    <lineage>
        <taxon>Bacteria</taxon>
        <taxon>Pseudomonadati</taxon>
        <taxon>Pseudomonadota</taxon>
        <taxon>Gammaproteobacteria</taxon>
        <taxon>Oceanospirillales</taxon>
        <taxon>Oceanospirillaceae</taxon>
        <taxon>Marinomonas</taxon>
    </lineage>
</organism>
<accession>F6CY50</accession>
<comment type="function">
    <text evidence="1">Catalyzes the formation of 5-methyl-uridine at position 1939 (m5U1939) in 23S rRNA.</text>
</comment>
<comment type="catalytic activity">
    <reaction evidence="1">
        <text>uridine(1939) in 23S rRNA + S-adenosyl-L-methionine = 5-methyluridine(1939) in 23S rRNA + S-adenosyl-L-homocysteine + H(+)</text>
        <dbReference type="Rhea" id="RHEA:42908"/>
        <dbReference type="Rhea" id="RHEA-COMP:10278"/>
        <dbReference type="Rhea" id="RHEA-COMP:10279"/>
        <dbReference type="ChEBI" id="CHEBI:15378"/>
        <dbReference type="ChEBI" id="CHEBI:57856"/>
        <dbReference type="ChEBI" id="CHEBI:59789"/>
        <dbReference type="ChEBI" id="CHEBI:65315"/>
        <dbReference type="ChEBI" id="CHEBI:74447"/>
        <dbReference type="EC" id="2.1.1.190"/>
    </reaction>
</comment>
<comment type="similarity">
    <text evidence="1">Belongs to the class I-like SAM-binding methyltransferase superfamily. RNA M5U methyltransferase family. RlmD subfamily.</text>
</comment>
<keyword id="KW-0004">4Fe-4S</keyword>
<keyword id="KW-0408">Iron</keyword>
<keyword id="KW-0411">Iron-sulfur</keyword>
<keyword id="KW-0479">Metal-binding</keyword>
<keyword id="KW-0489">Methyltransferase</keyword>
<keyword id="KW-0698">rRNA processing</keyword>
<keyword id="KW-0949">S-adenosyl-L-methionine</keyword>
<keyword id="KW-0808">Transferase</keyword>
<sequence length="438" mass="48710">MRRRTATRRPAKKAPLGPMQTYLVEGLTHEAKGVARLNGKVTFIEGALPGETVTAQVNKPGRRFDEAVLNAVIETSVDRVSPACQHFGDCGGCSFQHLEESAQRLAKADWLAGQLRNLLSKEQIECLFDVGSGYRRRARIAIDHKKNALVLGFRSKASNRVVDVEQCHVLTPSLQTLFVSLKVCLKQHPILSSLGHIELLEDTKGLSVVLRLVSNITPVQQQAYLDWAQQQDVELYWQAPKASRADLTDEQMRYYDVSNLRLKYHPQDFIQINEFMNQKMVAQAMAWLAPQKDDTVLDLFCGVGNFSLPLAQLAGSVIGVELQESMVQAGRHNASLNGLKNLSFVAADLTQPVAGQFSAENINKILLDPPRAGAFEFLDTIIHIAPQQILYVSCNASTLARDAEYLVLNGYKVVRAGLMDMFPQTSHVETMMLLQKQK</sequence>
<dbReference type="EC" id="2.1.1.190" evidence="1"/>
<dbReference type="EMBL" id="CP002771">
    <property type="protein sequence ID" value="AEF55682.1"/>
    <property type="molecule type" value="Genomic_DNA"/>
</dbReference>
<dbReference type="RefSeq" id="WP_013797154.1">
    <property type="nucleotide sequence ID" value="NC_015559.1"/>
</dbReference>
<dbReference type="SMR" id="F6CY50"/>
<dbReference type="STRING" id="491952.Mar181_2651"/>
<dbReference type="KEGG" id="mpc:Mar181_2651"/>
<dbReference type="eggNOG" id="COG2265">
    <property type="taxonomic scope" value="Bacteria"/>
</dbReference>
<dbReference type="HOGENOM" id="CLU_014689_8_2_6"/>
<dbReference type="OrthoDB" id="9804590at2"/>
<dbReference type="Proteomes" id="UP000009230">
    <property type="component" value="Chromosome"/>
</dbReference>
<dbReference type="GO" id="GO:0051539">
    <property type="term" value="F:4 iron, 4 sulfur cluster binding"/>
    <property type="evidence" value="ECO:0007669"/>
    <property type="project" value="UniProtKB-KW"/>
</dbReference>
<dbReference type="GO" id="GO:0005506">
    <property type="term" value="F:iron ion binding"/>
    <property type="evidence" value="ECO:0007669"/>
    <property type="project" value="UniProtKB-UniRule"/>
</dbReference>
<dbReference type="GO" id="GO:0003723">
    <property type="term" value="F:RNA binding"/>
    <property type="evidence" value="ECO:0007669"/>
    <property type="project" value="InterPro"/>
</dbReference>
<dbReference type="GO" id="GO:0070041">
    <property type="term" value="F:rRNA (uridine-C5-)-methyltransferase activity"/>
    <property type="evidence" value="ECO:0007669"/>
    <property type="project" value="UniProtKB-UniRule"/>
</dbReference>
<dbReference type="GO" id="GO:0070475">
    <property type="term" value="P:rRNA base methylation"/>
    <property type="evidence" value="ECO:0007669"/>
    <property type="project" value="TreeGrafter"/>
</dbReference>
<dbReference type="CDD" id="cd02440">
    <property type="entry name" value="AdoMet_MTases"/>
    <property type="match status" value="1"/>
</dbReference>
<dbReference type="FunFam" id="3.40.50.150:FF:000009">
    <property type="entry name" value="23S rRNA (Uracil(1939)-C(5))-methyltransferase RlmD"/>
    <property type="match status" value="1"/>
</dbReference>
<dbReference type="Gene3D" id="2.40.50.1070">
    <property type="match status" value="1"/>
</dbReference>
<dbReference type="Gene3D" id="2.40.50.140">
    <property type="entry name" value="Nucleic acid-binding proteins"/>
    <property type="match status" value="1"/>
</dbReference>
<dbReference type="Gene3D" id="3.40.50.150">
    <property type="entry name" value="Vaccinia Virus protein VP39"/>
    <property type="match status" value="1"/>
</dbReference>
<dbReference type="HAMAP" id="MF_01010">
    <property type="entry name" value="23SrRNA_methyltr_RlmD"/>
    <property type="match status" value="1"/>
</dbReference>
<dbReference type="InterPro" id="IPR001566">
    <property type="entry name" value="23S_rRNA_MeTrfase_RlmD"/>
</dbReference>
<dbReference type="InterPro" id="IPR030390">
    <property type="entry name" value="MeTrfase_TrmA_AS"/>
</dbReference>
<dbReference type="InterPro" id="IPR030391">
    <property type="entry name" value="MeTrfase_TrmA_CS"/>
</dbReference>
<dbReference type="InterPro" id="IPR012340">
    <property type="entry name" value="NA-bd_OB-fold"/>
</dbReference>
<dbReference type="InterPro" id="IPR029063">
    <property type="entry name" value="SAM-dependent_MTases_sf"/>
</dbReference>
<dbReference type="InterPro" id="IPR002792">
    <property type="entry name" value="TRAM_dom"/>
</dbReference>
<dbReference type="InterPro" id="IPR010280">
    <property type="entry name" value="U5_MeTrfase_fam"/>
</dbReference>
<dbReference type="NCBIfam" id="NF009639">
    <property type="entry name" value="PRK13168.1"/>
    <property type="match status" value="1"/>
</dbReference>
<dbReference type="NCBIfam" id="TIGR00479">
    <property type="entry name" value="rumA"/>
    <property type="match status" value="1"/>
</dbReference>
<dbReference type="PANTHER" id="PTHR11061:SF49">
    <property type="entry name" value="23S RRNA (URACIL(1939)-C(5))-METHYLTRANSFERASE RLMD"/>
    <property type="match status" value="1"/>
</dbReference>
<dbReference type="PANTHER" id="PTHR11061">
    <property type="entry name" value="RNA M5U METHYLTRANSFERASE"/>
    <property type="match status" value="1"/>
</dbReference>
<dbReference type="Pfam" id="PF01938">
    <property type="entry name" value="TRAM"/>
    <property type="match status" value="1"/>
</dbReference>
<dbReference type="Pfam" id="PF05958">
    <property type="entry name" value="tRNA_U5-meth_tr"/>
    <property type="match status" value="1"/>
</dbReference>
<dbReference type="SUPFAM" id="SSF50249">
    <property type="entry name" value="Nucleic acid-binding proteins"/>
    <property type="match status" value="1"/>
</dbReference>
<dbReference type="SUPFAM" id="SSF53335">
    <property type="entry name" value="S-adenosyl-L-methionine-dependent methyltransferases"/>
    <property type="match status" value="1"/>
</dbReference>
<dbReference type="PROSITE" id="PS51687">
    <property type="entry name" value="SAM_MT_RNA_M5U"/>
    <property type="match status" value="1"/>
</dbReference>
<dbReference type="PROSITE" id="PS50926">
    <property type="entry name" value="TRAM"/>
    <property type="match status" value="1"/>
</dbReference>
<dbReference type="PROSITE" id="PS01230">
    <property type="entry name" value="TRMA_1"/>
    <property type="match status" value="1"/>
</dbReference>
<dbReference type="PROSITE" id="PS01231">
    <property type="entry name" value="TRMA_2"/>
    <property type="match status" value="1"/>
</dbReference>
<feature type="chain" id="PRO_0000414807" description="23S rRNA (uracil(1939)-C(5))-methyltransferase RlmD">
    <location>
        <begin position="1"/>
        <end position="438"/>
    </location>
</feature>
<feature type="domain" description="TRAM" evidence="1">
    <location>
        <begin position="13"/>
        <end position="71"/>
    </location>
</feature>
<feature type="active site" description="Nucleophile" evidence="1">
    <location>
        <position position="394"/>
    </location>
</feature>
<feature type="binding site" evidence="1">
    <location>
        <position position="84"/>
    </location>
    <ligand>
        <name>[4Fe-4S] cluster</name>
        <dbReference type="ChEBI" id="CHEBI:49883"/>
    </ligand>
</feature>
<feature type="binding site" evidence="1">
    <location>
        <position position="90"/>
    </location>
    <ligand>
        <name>[4Fe-4S] cluster</name>
        <dbReference type="ChEBI" id="CHEBI:49883"/>
    </ligand>
</feature>
<feature type="binding site" evidence="1">
    <location>
        <position position="93"/>
    </location>
    <ligand>
        <name>[4Fe-4S] cluster</name>
        <dbReference type="ChEBI" id="CHEBI:49883"/>
    </ligand>
</feature>
<feature type="binding site" evidence="1">
    <location>
        <position position="167"/>
    </location>
    <ligand>
        <name>[4Fe-4S] cluster</name>
        <dbReference type="ChEBI" id="CHEBI:49883"/>
    </ligand>
</feature>
<feature type="binding site" evidence="1">
    <location>
        <position position="271"/>
    </location>
    <ligand>
        <name>S-adenosyl-L-methionine</name>
        <dbReference type="ChEBI" id="CHEBI:59789"/>
    </ligand>
</feature>
<feature type="binding site" evidence="1">
    <location>
        <position position="300"/>
    </location>
    <ligand>
        <name>S-adenosyl-L-methionine</name>
        <dbReference type="ChEBI" id="CHEBI:59789"/>
    </ligand>
</feature>
<feature type="binding site" evidence="1">
    <location>
        <position position="305"/>
    </location>
    <ligand>
        <name>S-adenosyl-L-methionine</name>
        <dbReference type="ChEBI" id="CHEBI:59789"/>
    </ligand>
</feature>
<feature type="binding site" evidence="1">
    <location>
        <position position="321"/>
    </location>
    <ligand>
        <name>S-adenosyl-L-methionine</name>
        <dbReference type="ChEBI" id="CHEBI:59789"/>
    </ligand>
</feature>
<feature type="binding site" evidence="1">
    <location>
        <position position="348"/>
    </location>
    <ligand>
        <name>S-adenosyl-L-methionine</name>
        <dbReference type="ChEBI" id="CHEBI:59789"/>
    </ligand>
</feature>
<feature type="binding site" evidence="1">
    <location>
        <position position="368"/>
    </location>
    <ligand>
        <name>S-adenosyl-L-methionine</name>
        <dbReference type="ChEBI" id="CHEBI:59789"/>
    </ligand>
</feature>
<protein>
    <recommendedName>
        <fullName evidence="1">23S rRNA (uracil(1939)-C(5))-methyltransferase RlmD</fullName>
        <ecNumber evidence="1">2.1.1.190</ecNumber>
    </recommendedName>
    <alternativeName>
        <fullName evidence="1">23S rRNA(m5U1939)-methyltransferase</fullName>
    </alternativeName>
</protein>
<name>RLMD_MARPP</name>
<gene>
    <name evidence="1" type="primary">rlmD</name>
    <name type="ordered locus">Mar181_2651</name>
</gene>
<evidence type="ECO:0000255" key="1">
    <source>
        <dbReference type="HAMAP-Rule" id="MF_01010"/>
    </source>
</evidence>